<name>DKTX_CYRSC</name>
<dbReference type="EMBL" id="HM015001">
    <property type="protein sequence ID" value="ADE62145.1"/>
    <property type="molecule type" value="mRNA"/>
</dbReference>
<dbReference type="PDB" id="2N9Z">
    <property type="method" value="NMR"/>
    <property type="chains" value="A=1-42"/>
</dbReference>
<dbReference type="PDB" id="2NAJ">
    <property type="method" value="NMR"/>
    <property type="chains" value="A=43-75"/>
</dbReference>
<dbReference type="PDB" id="5IRX">
    <property type="method" value="EM"/>
    <property type="resolution" value="2.95 A"/>
    <property type="chains" value="E/F=1-75"/>
</dbReference>
<dbReference type="PDB" id="6CUC">
    <property type="method" value="NMR"/>
    <property type="chains" value="A=1-79"/>
</dbReference>
<dbReference type="PDB" id="7L2M">
    <property type="method" value="EM"/>
    <property type="resolution" value="3.84 A"/>
    <property type="chains" value="E/F=1-75"/>
</dbReference>
<dbReference type="PDB" id="7L2R">
    <property type="method" value="EM"/>
    <property type="resolution" value="3.30 A"/>
    <property type="chains" value="E/F=1-75"/>
</dbReference>
<dbReference type="PDB" id="7L2T">
    <property type="method" value="EM"/>
    <property type="resolution" value="3.08 A"/>
    <property type="chains" value="E/F=1-75"/>
</dbReference>
<dbReference type="PDB" id="7L2U">
    <property type="method" value="EM"/>
    <property type="resolution" value="3.47 A"/>
    <property type="chains" value="E/F=1-75"/>
</dbReference>
<dbReference type="PDBsum" id="2N9Z"/>
<dbReference type="PDBsum" id="2NAJ"/>
<dbReference type="PDBsum" id="5IRX"/>
<dbReference type="PDBsum" id="6CUC"/>
<dbReference type="PDBsum" id="7L2M"/>
<dbReference type="PDBsum" id="7L2R"/>
<dbReference type="PDBsum" id="7L2T"/>
<dbReference type="PDBsum" id="7L2U"/>
<dbReference type="EMDB" id="EMD-23133"/>
<dbReference type="EMDB" id="EMD-23138"/>
<dbReference type="EMDB" id="EMD-23140"/>
<dbReference type="EMDB" id="EMD-23141"/>
<dbReference type="EMDB" id="EMD-8117"/>
<dbReference type="SMR" id="P0CH43"/>
<dbReference type="DIP" id="DIP-62030N"/>
<dbReference type="IntAct" id="P0CH43">
    <property type="interactions" value="1"/>
</dbReference>
<dbReference type="ArachnoServer" id="AS001687">
    <property type="toxin name" value="tau-theraphotoxin-Hs1a"/>
</dbReference>
<dbReference type="EvolutionaryTrace" id="P0CH43"/>
<dbReference type="GO" id="GO:0005576">
    <property type="term" value="C:extracellular region"/>
    <property type="evidence" value="ECO:0007669"/>
    <property type="project" value="UniProtKB-SubCell"/>
</dbReference>
<dbReference type="GO" id="GO:0099106">
    <property type="term" value="F:ion channel regulator activity"/>
    <property type="evidence" value="ECO:0007669"/>
    <property type="project" value="UniProtKB-KW"/>
</dbReference>
<dbReference type="GO" id="GO:0008289">
    <property type="term" value="F:lipid binding"/>
    <property type="evidence" value="ECO:0007669"/>
    <property type="project" value="UniProtKB-KW"/>
</dbReference>
<dbReference type="GO" id="GO:0090729">
    <property type="term" value="F:toxin activity"/>
    <property type="evidence" value="ECO:0007669"/>
    <property type="project" value="UniProtKB-KW"/>
</dbReference>
<protein>
    <recommendedName>
        <fullName evidence="6">Tau-theraphotoxin-Hs1a</fullName>
        <shortName evidence="6">Tau-TRTX-Hs1a</shortName>
    </recommendedName>
    <alternativeName>
        <fullName evidence="5">Double-knot toxin</fullName>
        <shortName evidence="5">DkTx</shortName>
    </alternativeName>
</protein>
<accession>P0CH43</accession>
<accession>D7QZ10</accession>
<proteinExistence type="evidence at protein level"/>
<feature type="chain" id="PRO_0000398387" description="Tau-theraphotoxin-Hs1a" evidence="7">
    <location>
        <begin position="1"/>
        <end position="79"/>
    </location>
</feature>
<feature type="repeat" description="Domain 1" evidence="7">
    <location>
        <begin position="2"/>
        <end position="31"/>
    </location>
</feature>
<feature type="repeat" description="Domain 2" evidence="7">
    <location>
        <begin position="42"/>
        <end position="71"/>
    </location>
</feature>
<feature type="region of interest" description="2 X approximate repeats with cysteine pattern C-C-CC-C-C" evidence="7">
    <location>
        <begin position="2"/>
        <end position="71"/>
    </location>
</feature>
<feature type="site" description="Interacts with TRPV1 (reaches into the void formed by S4, S6 and pore-helix)" evidence="4">
    <location>
        <position position="11"/>
    </location>
</feature>
<feature type="site" description="Important residue for activation of TRPV1" evidence="8">
    <location>
        <position position="25"/>
    </location>
</feature>
<feature type="site" description="Interacts with TRPV1 (reaches into the void formed by S4, S6 and pore-helix)" evidence="4">
    <location>
        <position position="27"/>
    </location>
</feature>
<feature type="site" description="Interacts with TRPV1 (reaches into the void formed by S4, S6 and pore-helix)" evidence="4">
    <location>
        <position position="53"/>
    </location>
</feature>
<feature type="site" description="Important residue for activation of TRPV1" evidence="3">
    <location>
        <position position="65"/>
    </location>
</feature>
<feature type="site" description="Interacts with TRPV1 (reaches into the void formed by S4, S6 and pore-helix)" evidence="4">
    <location>
        <position position="67"/>
    </location>
</feature>
<feature type="disulfide bond" evidence="3 4 9 11">
    <location>
        <begin position="2"/>
        <end position="16"/>
    </location>
</feature>
<feature type="disulfide bond" evidence="3 4 9 11">
    <location>
        <begin position="9"/>
        <end position="23"/>
    </location>
</feature>
<feature type="disulfide bond" evidence="3 4 9 11">
    <location>
        <begin position="15"/>
        <end position="31"/>
    </location>
</feature>
<feature type="disulfide bond" evidence="3 4 10 11">
    <location>
        <begin position="44"/>
        <end position="58"/>
    </location>
</feature>
<feature type="disulfide bond" evidence="3 4 10 11">
    <location>
        <begin position="51"/>
        <end position="63"/>
    </location>
</feature>
<feature type="disulfide bond" evidence="3 4 10 11">
    <location>
        <begin position="57"/>
        <end position="71"/>
    </location>
</feature>
<feature type="mutagenesis site" description="Important decrease in activation of TRPV1 (in K2 synthetic construct)." evidence="3">
    <original>L</original>
    <variation>A</variation>
    <location>
        <position position="65"/>
    </location>
</feature>
<feature type="turn" evidence="13">
    <location>
        <begin position="9"/>
        <end position="12"/>
    </location>
</feature>
<feature type="turn" evidence="13">
    <location>
        <begin position="18"/>
        <end position="20"/>
    </location>
</feature>
<feature type="strand" evidence="13">
    <location>
        <begin position="25"/>
        <end position="28"/>
    </location>
</feature>
<feature type="strand" evidence="14">
    <location>
        <begin position="42"/>
        <end position="45"/>
    </location>
</feature>
<feature type="strand" evidence="13">
    <location>
        <begin position="49"/>
        <end position="51"/>
    </location>
</feature>
<feature type="turn" evidence="13">
    <location>
        <begin position="52"/>
        <end position="54"/>
    </location>
</feature>
<feature type="strand" evidence="12">
    <location>
        <begin position="59"/>
        <end position="62"/>
    </location>
</feature>
<feature type="strand" evidence="13">
    <location>
        <begin position="65"/>
        <end position="68"/>
    </location>
</feature>
<organism>
    <name type="scientific">Cyriopagopus schmidti</name>
    <name type="common">Chinese bird spider</name>
    <name type="synonym">Haplopelma schmidti</name>
    <dbReference type="NCBI Taxonomy" id="29017"/>
    <lineage>
        <taxon>Eukaryota</taxon>
        <taxon>Metazoa</taxon>
        <taxon>Ecdysozoa</taxon>
        <taxon>Arthropoda</taxon>
        <taxon>Chelicerata</taxon>
        <taxon>Arachnida</taxon>
        <taxon>Araneae</taxon>
        <taxon>Mygalomorphae</taxon>
        <taxon>Theraphosidae</taxon>
        <taxon>Cyriopagopus</taxon>
    </lineage>
</organism>
<keyword id="KW-0002">3D-structure</keyword>
<keyword id="KW-0903">Direct protein sequencing</keyword>
<keyword id="KW-1015">Disulfide bond</keyword>
<keyword id="KW-0872">Ion channel impairing toxin</keyword>
<keyword id="KW-0960">Knottin</keyword>
<keyword id="KW-0446">Lipid-binding</keyword>
<keyword id="KW-0677">Repeat</keyword>
<keyword id="KW-0964">Secreted</keyword>
<keyword id="KW-0800">Toxin</keyword>
<reference key="1">
    <citation type="journal article" date="2010" name="Cell">
        <title>A bivalent tarantula toxin activates the capsaicin receptor, TRPV1, by targeting the outer pore domain.</title>
        <authorList>
            <person name="Bohlen C.J."/>
            <person name="Priel A."/>
            <person name="Zhou S."/>
            <person name="King D."/>
            <person name="Siemens J."/>
            <person name="Julius D."/>
        </authorList>
    </citation>
    <scope>NUCLEOTIDE SEQUENCE [MRNA]</scope>
    <scope>PARTIAL PROTEIN SEQUENCE</scope>
    <scope>DOMAIN</scope>
    <scope>FUNCTION</scope>
    <scope>SUBCELLULAR LOCATION</scope>
    <source>
        <tissue>Venom</tissue>
        <tissue>Venom gland</tissue>
    </source>
</reference>
<reference key="2">
    <citation type="journal article" date="2013" name="Nature">
        <title>TRPV1 structures in distinct conformations reveal activation mechanisms.</title>
        <authorList>
            <person name="Cao E."/>
            <person name="Liao M."/>
            <person name="Cheng Y."/>
            <person name="Julius D."/>
        </authorList>
    </citation>
    <scope>SUBUNIT</scope>
</reference>
<reference evidence="9 10" key="3">
    <citation type="journal article" date="2016" name="Elife">
        <title>Structural insights into the mechanism of activation of the TRPV1 channel by a membrane-bound tarantula toxin.</title>
        <authorList>
            <person name="Bae C."/>
            <person name="Anselmi C."/>
            <person name="Kalia J."/>
            <person name="Jara-Oseguera A."/>
            <person name="Schwieters C.D."/>
            <person name="Krepkiy D."/>
            <person name="Won Lee C."/>
            <person name="Kim E.H."/>
            <person name="Kim J.I."/>
            <person name="Faraldo-Gomez J.D."/>
            <person name="Swartz K.J."/>
        </authorList>
    </citation>
    <scope>FUNCTION</scope>
    <scope>STRUCTURE BY NMR OF 1-42 AND 43-75</scope>
    <scope>MUTAGENESIS OF LEU-65</scope>
    <scope>LIPID-BINDING</scope>
</reference>
<reference evidence="11" key="4">
    <citation type="journal article" date="2016" name="Nature">
        <title>TRPV1 structures in nanodiscs reveal mechanisms of ligand and lipid action.</title>
        <authorList>
            <person name="Gao Y."/>
            <person name="Cao E."/>
            <person name="Julius D."/>
            <person name="Cheng Y."/>
        </authorList>
    </citation>
    <scope>STRUCTURE BY ELECTRON MICROSCOPY (2.95 ANGSTROMS) OF 1-75</scope>
    <scope>LIPID-BINDING</scope>
</reference>
<sequence>DCAKEGEVCSWGKKCCDLDNFYCPMEFIPHCKKYKPYVPVTTNCAKEGEVCGWGSKCCHGLDCPLAFIPYCEKYRGRND</sequence>
<evidence type="ECO:0000269" key="1">
    <source>
    </source>
</evidence>
<evidence type="ECO:0000269" key="2">
    <source>
    </source>
</evidence>
<evidence type="ECO:0000269" key="3">
    <source>
    </source>
</evidence>
<evidence type="ECO:0000269" key="4">
    <source>
    </source>
</evidence>
<evidence type="ECO:0000303" key="5">
    <source>
    </source>
</evidence>
<evidence type="ECO:0000305" key="6"/>
<evidence type="ECO:0000305" key="7">
    <source>
    </source>
</evidence>
<evidence type="ECO:0000305" key="8">
    <source>
    </source>
</evidence>
<evidence type="ECO:0000312" key="9">
    <source>
        <dbReference type="PDB" id="2N9Z"/>
    </source>
</evidence>
<evidence type="ECO:0000312" key="10">
    <source>
        <dbReference type="PDB" id="2NAJ"/>
    </source>
</evidence>
<evidence type="ECO:0000312" key="11">
    <source>
        <dbReference type="PDB" id="5IRX"/>
    </source>
</evidence>
<evidence type="ECO:0007829" key="12">
    <source>
        <dbReference type="PDB" id="2NAJ"/>
    </source>
</evidence>
<evidence type="ECO:0007829" key="13">
    <source>
        <dbReference type="PDB" id="5IRX"/>
    </source>
</evidence>
<evidence type="ECO:0007829" key="14">
    <source>
        <dbReference type="PDB" id="7L2T"/>
    </source>
</evidence>
<comment type="function">
    <text evidence="1 3 4">Selectively activates the heat-activated TRPV1 channel. It binds to TRPV1 in an open state-dependent manner, trapping it there to produce irreversible currents (PubMed:20510930, PubMed:26880553, PubMed:27281200). It binds to the outer edge of the external pore of TRPV1 in a counterclockwise configuration, using a limited protein-protein interface and inserting hydrophobic residues into the bilayer (PubMed:26880553, PubMed:27281200). It also partitions naturally into membranes, with the two lobes exhibiting opposing energetics for membrane partitioning (K1) and channel activation (K2) (PubMed:26880553). In addition, the toxin disrupts a cluster of hydrophobic residues behind the selectivity filter that are critical for channel activation (PubMed:26880553).</text>
</comment>
<comment type="subunit">
    <text evidence="2">Interacts with TRPV1 (2 toxins (4 moieties) bind 1 channel (homotetramer)).</text>
</comment>
<comment type="interaction">
    <interactant intactId="EBI-2793994">
        <id>P0CH43</id>
    </interactant>
    <interactant intactId="EBI-2794004">
        <id>O35433</id>
        <label>Trpv1</label>
    </interactant>
    <organismsDiffer>true</organismsDiffer>
    <experiments>2</experiments>
</comment>
<comment type="subcellular location">
    <subcellularLocation>
        <location evidence="1">Secreted</location>
    </subcellularLocation>
</comment>
<comment type="tissue specificity">
    <text evidence="7">Expressed by the venom gland.</text>
</comment>
<comment type="domain">
    <text evidence="1">The presence of 'disulfide through disulfide knots' structurally defines this protein as a knottin. This toxin contains 2 'disulfide through disulfide knots' that are separated by a short linker. Bivalence accounts for irreversible toxin action.</text>
</comment>
<comment type="similarity">
    <text evidence="6">Belongs to the neurotoxin 23 family. Double-knot toxin subfamily.</text>
</comment>